<sequence length="503" mass="52955">MALGRAFSVAVRGLDGEIVEIEADITSGLPGVHLVGLPDAALQESRDRVRAAVTNCGNSWPMARLTLALSPATLPKMGSVYDIALAAAVLSAQQKKPWERLENTLLLGELSLDGRVRPVRGVLPAVLAAKRDGWPAVVVPADNLPEASLVDGIDVRGVRTLGQLQSWLRGSTGLAGRITTADTTPESAADLADVVGQSQARFAVEVAAAGAHHLMLTVPPGVGKTMLAQRLPGLLPSLSGSESLEVTAIHSVAGLLSGDTPLITRPPFVAPHHSSSVAALVGGGSGMARPGAVSRAHRGVLFLDECAEISLSALEALRTPLEDGEIRLARRDGVACYPARFQLVLAANPCPCAPADPQDCICAAATKRRYLGKLSGPLLDRVDLRVQMHRLRAGAFSAADGESTSQVRQRVALAREAAAQRWRPHGFRTNAEVSGPLLRRKFRPSSAAMLPLRTALDRGLLSIRGVDRTLRVAWSLADLAGRTSPGIDEVAAALSFRQTGARR</sequence>
<dbReference type="EMBL" id="AE000516">
    <property type="protein sequence ID" value="AAK47291.1"/>
    <property type="molecule type" value="Genomic_DNA"/>
</dbReference>
<dbReference type="PIR" id="D70926">
    <property type="entry name" value="D70926"/>
</dbReference>
<dbReference type="RefSeq" id="WP_003917703.1">
    <property type="nucleotide sequence ID" value="NZ_KK341227.1"/>
</dbReference>
<dbReference type="SMR" id="P9WPR0"/>
<dbReference type="KEGG" id="mtc:MT2965"/>
<dbReference type="PATRIC" id="fig|83331.31.peg.3205"/>
<dbReference type="HOGENOM" id="CLU_026145_1_0_11"/>
<dbReference type="Proteomes" id="UP000001020">
    <property type="component" value="Chromosome"/>
</dbReference>
<dbReference type="GO" id="GO:0005524">
    <property type="term" value="F:ATP binding"/>
    <property type="evidence" value="ECO:0007669"/>
    <property type="project" value="InterPro"/>
</dbReference>
<dbReference type="GO" id="GO:0016887">
    <property type="term" value="F:ATP hydrolysis activity"/>
    <property type="evidence" value="ECO:0007669"/>
    <property type="project" value="InterPro"/>
</dbReference>
<dbReference type="CDD" id="cd00009">
    <property type="entry name" value="AAA"/>
    <property type="match status" value="1"/>
</dbReference>
<dbReference type="FunFam" id="3.30.230.10:FF:000048">
    <property type="entry name" value="AAA family ATPase"/>
    <property type="match status" value="1"/>
</dbReference>
<dbReference type="FunFam" id="3.40.50.300:FF:001969">
    <property type="entry name" value="Putative magnesium chelatase"/>
    <property type="match status" value="1"/>
</dbReference>
<dbReference type="Gene3D" id="3.30.230.10">
    <property type="match status" value="1"/>
</dbReference>
<dbReference type="Gene3D" id="3.40.50.300">
    <property type="entry name" value="P-loop containing nucleotide triphosphate hydrolases"/>
    <property type="match status" value="1"/>
</dbReference>
<dbReference type="InterPro" id="IPR003593">
    <property type="entry name" value="AAA+_ATPase"/>
</dbReference>
<dbReference type="InterPro" id="IPR045006">
    <property type="entry name" value="CHLI-like"/>
</dbReference>
<dbReference type="InterPro" id="IPR004482">
    <property type="entry name" value="Mg_chelat-rel"/>
</dbReference>
<dbReference type="InterPro" id="IPR025158">
    <property type="entry name" value="Mg_chelat-rel_C"/>
</dbReference>
<dbReference type="InterPro" id="IPR000523">
    <property type="entry name" value="Mg_chelatse_chII-like_cat_dom"/>
</dbReference>
<dbReference type="InterPro" id="IPR027417">
    <property type="entry name" value="P-loop_NTPase"/>
</dbReference>
<dbReference type="InterPro" id="IPR020568">
    <property type="entry name" value="Ribosomal_Su5_D2-typ_SF"/>
</dbReference>
<dbReference type="InterPro" id="IPR014721">
    <property type="entry name" value="Ribsml_uS5_D2-typ_fold_subgr"/>
</dbReference>
<dbReference type="NCBIfam" id="TIGR00368">
    <property type="entry name" value="YifB family Mg chelatase-like AAA ATPase"/>
    <property type="match status" value="1"/>
</dbReference>
<dbReference type="PANTHER" id="PTHR32039:SF7">
    <property type="entry name" value="COMPETENCE PROTEIN COMM"/>
    <property type="match status" value="1"/>
</dbReference>
<dbReference type="PANTHER" id="PTHR32039">
    <property type="entry name" value="MAGNESIUM-CHELATASE SUBUNIT CHLI"/>
    <property type="match status" value="1"/>
</dbReference>
<dbReference type="Pfam" id="PF13541">
    <property type="entry name" value="ChlI"/>
    <property type="match status" value="1"/>
</dbReference>
<dbReference type="Pfam" id="PF01078">
    <property type="entry name" value="Mg_chelatase"/>
    <property type="match status" value="1"/>
</dbReference>
<dbReference type="Pfam" id="PF13335">
    <property type="entry name" value="Mg_chelatase_C"/>
    <property type="match status" value="1"/>
</dbReference>
<dbReference type="SMART" id="SM00382">
    <property type="entry name" value="AAA"/>
    <property type="match status" value="1"/>
</dbReference>
<dbReference type="SUPFAM" id="SSF52540">
    <property type="entry name" value="P-loop containing nucleoside triphosphate hydrolases"/>
    <property type="match status" value="1"/>
</dbReference>
<dbReference type="SUPFAM" id="SSF54211">
    <property type="entry name" value="Ribosomal protein S5 domain 2-like"/>
    <property type="match status" value="1"/>
</dbReference>
<gene>
    <name type="ordered locus">MT2965</name>
</gene>
<comment type="similarity">
    <text evidence="1">Belongs to the Mg-chelatase subunits D/I family. ComM subfamily.</text>
</comment>
<proteinExistence type="inferred from homology"/>
<feature type="chain" id="PRO_0000426908" description="Uncharacterized protein MT2965">
    <location>
        <begin position="1"/>
        <end position="503"/>
    </location>
</feature>
<organism>
    <name type="scientific">Mycobacterium tuberculosis (strain CDC 1551 / Oshkosh)</name>
    <dbReference type="NCBI Taxonomy" id="83331"/>
    <lineage>
        <taxon>Bacteria</taxon>
        <taxon>Bacillati</taxon>
        <taxon>Actinomycetota</taxon>
        <taxon>Actinomycetes</taxon>
        <taxon>Mycobacteriales</taxon>
        <taxon>Mycobacteriaceae</taxon>
        <taxon>Mycobacterium</taxon>
        <taxon>Mycobacterium tuberculosis complex</taxon>
    </lineage>
</organism>
<reference key="1">
    <citation type="journal article" date="2002" name="J. Bacteriol.">
        <title>Whole-genome comparison of Mycobacterium tuberculosis clinical and laboratory strains.</title>
        <authorList>
            <person name="Fleischmann R.D."/>
            <person name="Alland D."/>
            <person name="Eisen J.A."/>
            <person name="Carpenter L."/>
            <person name="White O."/>
            <person name="Peterson J.D."/>
            <person name="DeBoy R.T."/>
            <person name="Dodson R.J."/>
            <person name="Gwinn M.L."/>
            <person name="Haft D.H."/>
            <person name="Hickey E.K."/>
            <person name="Kolonay J.F."/>
            <person name="Nelson W.C."/>
            <person name="Umayam L.A."/>
            <person name="Ermolaeva M.D."/>
            <person name="Salzberg S.L."/>
            <person name="Delcher A."/>
            <person name="Utterback T.R."/>
            <person name="Weidman J.F."/>
            <person name="Khouri H.M."/>
            <person name="Gill J."/>
            <person name="Mikula A."/>
            <person name="Bishai W."/>
            <person name="Jacobs W.R. Jr."/>
            <person name="Venter J.C."/>
            <person name="Fraser C.M."/>
        </authorList>
    </citation>
    <scope>NUCLEOTIDE SEQUENCE [LARGE SCALE GENOMIC DNA]</scope>
    <source>
        <strain>CDC 1551 / Oshkosh</strain>
    </source>
</reference>
<evidence type="ECO:0000305" key="1"/>
<protein>
    <recommendedName>
        <fullName>Uncharacterized protein MT2965</fullName>
    </recommendedName>
</protein>
<accession>P9WPR0</accession>
<accession>L0TCK1</accession>
<accession>P68909</accession>
<accession>Q10818</accession>
<name>Y2897_MYCTO</name>
<keyword id="KW-1185">Reference proteome</keyword>